<protein>
    <recommendedName>
        <fullName evidence="1">Nucleoid-associated protein YejK</fullName>
    </recommendedName>
</protein>
<feature type="chain" id="PRO_1000212733" description="Nucleoid-associated protein YejK">
    <location>
        <begin position="1"/>
        <end position="335"/>
    </location>
</feature>
<keyword id="KW-0963">Cytoplasm</keyword>
<organism>
    <name type="scientific">Escherichia coli (strain K12 / MC4100 / BW2952)</name>
    <dbReference type="NCBI Taxonomy" id="595496"/>
    <lineage>
        <taxon>Bacteria</taxon>
        <taxon>Pseudomonadati</taxon>
        <taxon>Pseudomonadota</taxon>
        <taxon>Gammaproteobacteria</taxon>
        <taxon>Enterobacterales</taxon>
        <taxon>Enterobacteriaceae</taxon>
        <taxon>Escherichia</taxon>
    </lineage>
</organism>
<evidence type="ECO:0000255" key="1">
    <source>
        <dbReference type="HAMAP-Rule" id="MF_00730"/>
    </source>
</evidence>
<gene>
    <name evidence="1" type="primary">yejK</name>
    <name type="ordered locus">BWG_1962</name>
</gene>
<proteinExistence type="inferred from homology"/>
<name>NDPA_ECOBW</name>
<dbReference type="EMBL" id="CP001396">
    <property type="protein sequence ID" value="ACR63923.1"/>
    <property type="molecule type" value="Genomic_DNA"/>
</dbReference>
<dbReference type="RefSeq" id="WP_000050793.1">
    <property type="nucleotide sequence ID" value="NC_012759.1"/>
</dbReference>
<dbReference type="SMR" id="C4ZU31"/>
<dbReference type="KEGG" id="ebw:BWG_1962"/>
<dbReference type="HOGENOM" id="CLU_063050_0_1_6"/>
<dbReference type="GO" id="GO:0043590">
    <property type="term" value="C:bacterial nucleoid"/>
    <property type="evidence" value="ECO:0007669"/>
    <property type="project" value="TreeGrafter"/>
</dbReference>
<dbReference type="GO" id="GO:0005737">
    <property type="term" value="C:cytoplasm"/>
    <property type="evidence" value="ECO:0007669"/>
    <property type="project" value="UniProtKB-UniRule"/>
</dbReference>
<dbReference type="GO" id="GO:0003690">
    <property type="term" value="F:double-stranded DNA binding"/>
    <property type="evidence" value="ECO:0007669"/>
    <property type="project" value="TreeGrafter"/>
</dbReference>
<dbReference type="GO" id="GO:0003727">
    <property type="term" value="F:single-stranded RNA binding"/>
    <property type="evidence" value="ECO:0007669"/>
    <property type="project" value="TreeGrafter"/>
</dbReference>
<dbReference type="HAMAP" id="MF_00730">
    <property type="entry name" value="NdpA"/>
    <property type="match status" value="1"/>
</dbReference>
<dbReference type="InterPro" id="IPR007358">
    <property type="entry name" value="Nucleoid_associated_NdpA"/>
</dbReference>
<dbReference type="NCBIfam" id="NF001557">
    <property type="entry name" value="PRK00378.1"/>
    <property type="match status" value="1"/>
</dbReference>
<dbReference type="PANTHER" id="PTHR38772">
    <property type="match status" value="1"/>
</dbReference>
<dbReference type="PANTHER" id="PTHR38772:SF1">
    <property type="entry name" value="NUCLEOID-ASSOCIATED PROTEIN YEJK"/>
    <property type="match status" value="1"/>
</dbReference>
<dbReference type="Pfam" id="PF04245">
    <property type="entry name" value="NA37"/>
    <property type="match status" value="1"/>
</dbReference>
<comment type="subcellular location">
    <subcellularLocation>
        <location evidence="1">Cytoplasm</location>
        <location evidence="1">Nucleoid</location>
    </subcellularLocation>
</comment>
<comment type="similarity">
    <text evidence="1">Belongs to the YejK family.</text>
</comment>
<sequence length="335" mass="37823">MSLDINQIALHQLIKRDEQNLELVLRDSLLEPTETVVEMVAELHRVYSAKNKAYGLFSEESELAQTLRLQRQGEEDFLAFSRAATGRLRDELAKYPFADGGFVLFCHYRYLAVEYLLVAVLSNLSSMRVNENLDINPTHYLDINHADIVARIDLTEWETNPESTRYLTFLKGRVGRKVADFFMDFLGASEGLNAKAQNRGLLQAVDDFTAEAQLDKAERQNVRQQVYSYCNEQLQAGEEIELKSLSKELAGVSEVSFTEFAAEKGYELEESFPADRSTLRQLTKFAGSGGGLTINFDAMLLGERIFWDPATDTLTIKGTPPNLRDQLQRRTSGGN</sequence>
<accession>C4ZU31</accession>
<reference key="1">
    <citation type="journal article" date="2009" name="J. Bacteriol.">
        <title>Genomic sequencing reveals regulatory mutations and recombinational events in the widely used MC4100 lineage of Escherichia coli K-12.</title>
        <authorList>
            <person name="Ferenci T."/>
            <person name="Zhou Z."/>
            <person name="Betteridge T."/>
            <person name="Ren Y."/>
            <person name="Liu Y."/>
            <person name="Feng L."/>
            <person name="Reeves P.R."/>
            <person name="Wang L."/>
        </authorList>
    </citation>
    <scope>NUCLEOTIDE SEQUENCE [LARGE SCALE GENOMIC DNA]</scope>
    <source>
        <strain>K12 / MC4100 / BW2952</strain>
    </source>
</reference>